<reference key="1">
    <citation type="submission" date="2008-01" db="EMBL/GenBank/DDBJ databases">
        <title>Complete sequence of Pseudomonas putida GB-1.</title>
        <authorList>
            <consortium name="US DOE Joint Genome Institute"/>
            <person name="Copeland A."/>
            <person name="Lucas S."/>
            <person name="Lapidus A."/>
            <person name="Barry K."/>
            <person name="Glavina del Rio T."/>
            <person name="Dalin E."/>
            <person name="Tice H."/>
            <person name="Pitluck S."/>
            <person name="Bruce D."/>
            <person name="Goodwin L."/>
            <person name="Chertkov O."/>
            <person name="Brettin T."/>
            <person name="Detter J.C."/>
            <person name="Han C."/>
            <person name="Kuske C.R."/>
            <person name="Schmutz J."/>
            <person name="Larimer F."/>
            <person name="Land M."/>
            <person name="Hauser L."/>
            <person name="Kyrpides N."/>
            <person name="Kim E."/>
            <person name="McCarthy J.K."/>
            <person name="Richardson P."/>
        </authorList>
    </citation>
    <scope>NUCLEOTIDE SEQUENCE [LARGE SCALE GENOMIC DNA]</scope>
    <source>
        <strain>GB-1</strain>
    </source>
</reference>
<protein>
    <recommendedName>
        <fullName evidence="1">Small ribosomal subunit protein bS20</fullName>
    </recommendedName>
    <alternativeName>
        <fullName evidence="3">30S ribosomal protein S20</fullName>
    </alternativeName>
</protein>
<comment type="function">
    <text evidence="1">Binds directly to 16S ribosomal RNA.</text>
</comment>
<comment type="similarity">
    <text evidence="1">Belongs to the bacterial ribosomal protein bS20 family.</text>
</comment>
<gene>
    <name evidence="1" type="primary">rpsT</name>
    <name type="ordered locus">PputGB1_0646</name>
</gene>
<name>RS20_PSEPG</name>
<dbReference type="EMBL" id="CP000926">
    <property type="protein sequence ID" value="ABY96557.1"/>
    <property type="molecule type" value="Genomic_DNA"/>
</dbReference>
<dbReference type="RefSeq" id="WP_003247625.1">
    <property type="nucleotide sequence ID" value="NC_010322.1"/>
</dbReference>
<dbReference type="SMR" id="B0KM81"/>
<dbReference type="GeneID" id="97166133"/>
<dbReference type="KEGG" id="ppg:PputGB1_0646"/>
<dbReference type="eggNOG" id="COG0268">
    <property type="taxonomic scope" value="Bacteria"/>
</dbReference>
<dbReference type="HOGENOM" id="CLU_160655_4_0_6"/>
<dbReference type="Proteomes" id="UP000002157">
    <property type="component" value="Chromosome"/>
</dbReference>
<dbReference type="GO" id="GO:0005829">
    <property type="term" value="C:cytosol"/>
    <property type="evidence" value="ECO:0007669"/>
    <property type="project" value="TreeGrafter"/>
</dbReference>
<dbReference type="GO" id="GO:0015935">
    <property type="term" value="C:small ribosomal subunit"/>
    <property type="evidence" value="ECO:0007669"/>
    <property type="project" value="TreeGrafter"/>
</dbReference>
<dbReference type="GO" id="GO:0070181">
    <property type="term" value="F:small ribosomal subunit rRNA binding"/>
    <property type="evidence" value="ECO:0007669"/>
    <property type="project" value="TreeGrafter"/>
</dbReference>
<dbReference type="GO" id="GO:0003735">
    <property type="term" value="F:structural constituent of ribosome"/>
    <property type="evidence" value="ECO:0007669"/>
    <property type="project" value="InterPro"/>
</dbReference>
<dbReference type="GO" id="GO:0006412">
    <property type="term" value="P:translation"/>
    <property type="evidence" value="ECO:0007669"/>
    <property type="project" value="UniProtKB-UniRule"/>
</dbReference>
<dbReference type="FunFam" id="1.20.58.110:FF:000001">
    <property type="entry name" value="30S ribosomal protein S20"/>
    <property type="match status" value="1"/>
</dbReference>
<dbReference type="Gene3D" id="1.20.58.110">
    <property type="entry name" value="Ribosomal protein S20"/>
    <property type="match status" value="1"/>
</dbReference>
<dbReference type="HAMAP" id="MF_00500">
    <property type="entry name" value="Ribosomal_bS20"/>
    <property type="match status" value="1"/>
</dbReference>
<dbReference type="InterPro" id="IPR002583">
    <property type="entry name" value="Ribosomal_bS20"/>
</dbReference>
<dbReference type="InterPro" id="IPR036510">
    <property type="entry name" value="Ribosomal_bS20_sf"/>
</dbReference>
<dbReference type="NCBIfam" id="TIGR00029">
    <property type="entry name" value="S20"/>
    <property type="match status" value="1"/>
</dbReference>
<dbReference type="PANTHER" id="PTHR33398">
    <property type="entry name" value="30S RIBOSOMAL PROTEIN S20"/>
    <property type="match status" value="1"/>
</dbReference>
<dbReference type="PANTHER" id="PTHR33398:SF1">
    <property type="entry name" value="SMALL RIBOSOMAL SUBUNIT PROTEIN BS20C"/>
    <property type="match status" value="1"/>
</dbReference>
<dbReference type="Pfam" id="PF01649">
    <property type="entry name" value="Ribosomal_S20p"/>
    <property type="match status" value="1"/>
</dbReference>
<dbReference type="SUPFAM" id="SSF46992">
    <property type="entry name" value="Ribosomal protein S20"/>
    <property type="match status" value="1"/>
</dbReference>
<feature type="chain" id="PRO_1000081443" description="Small ribosomal subunit protein bS20">
    <location>
        <begin position="1"/>
        <end position="92"/>
    </location>
</feature>
<feature type="region of interest" description="Disordered" evidence="2">
    <location>
        <begin position="1"/>
        <end position="23"/>
    </location>
</feature>
<feature type="compositionally biased region" description="Basic residues" evidence="2">
    <location>
        <begin position="7"/>
        <end position="20"/>
    </location>
</feature>
<accession>B0KM81</accession>
<keyword id="KW-0687">Ribonucleoprotein</keyword>
<keyword id="KW-0689">Ribosomal protein</keyword>
<keyword id="KW-0694">RNA-binding</keyword>
<keyword id="KW-0699">rRNA-binding</keyword>
<proteinExistence type="inferred from homology"/>
<evidence type="ECO:0000255" key="1">
    <source>
        <dbReference type="HAMAP-Rule" id="MF_00500"/>
    </source>
</evidence>
<evidence type="ECO:0000256" key="2">
    <source>
        <dbReference type="SAM" id="MobiDB-lite"/>
    </source>
</evidence>
<evidence type="ECO:0000305" key="3"/>
<organism>
    <name type="scientific">Pseudomonas putida (strain GB-1)</name>
    <dbReference type="NCBI Taxonomy" id="76869"/>
    <lineage>
        <taxon>Bacteria</taxon>
        <taxon>Pseudomonadati</taxon>
        <taxon>Pseudomonadota</taxon>
        <taxon>Gammaproteobacteria</taxon>
        <taxon>Pseudomonadales</taxon>
        <taxon>Pseudomonadaceae</taxon>
        <taxon>Pseudomonas</taxon>
    </lineage>
</organism>
<sequence length="92" mass="10069">MANTPSAKKRAKQAEKRRSHNASLRSMVRTYIKNVVKAIDAKDAEKAQAAYVLAVPVIDRMADKGIIHKNKAARHKGRLNGHIKALKEAAAA</sequence>